<reference key="1">
    <citation type="journal article" date="1987" name="J. Bacteriol.">
        <title>Structure and organization of the hisA gene of the thermophilic archaebacterium Methanococcus thermolithotrophicus.</title>
        <authorList>
            <person name="Weil C.F."/>
            <person name="Beckler G.S."/>
            <person name="Reeve J.N."/>
        </authorList>
    </citation>
    <scope>NUCLEOTIDE SEQUENCE [GENOMIC DNA]</scope>
</reference>
<organism>
    <name type="scientific">Methanothermococcus thermolithotrophicus</name>
    <name type="common">Methanococcus thermolithotrophicus</name>
    <dbReference type="NCBI Taxonomy" id="2186"/>
    <lineage>
        <taxon>Archaea</taxon>
        <taxon>Methanobacteriati</taxon>
        <taxon>Methanobacteriota</taxon>
        <taxon>Methanomada group</taxon>
        <taxon>Methanococci</taxon>
        <taxon>Methanococcales</taxon>
        <taxon>Methanococcaceae</taxon>
        <taxon>Methanothermococcus</taxon>
    </lineage>
</organism>
<comment type="catalytic activity">
    <reaction>
        <text>1-(5-phospho-beta-D-ribosyl)-5-[(5-phospho-beta-D-ribosylamino)methylideneamino]imidazole-4-carboxamide = 5-[(5-phospho-1-deoxy-D-ribulos-1-ylimino)methylamino]-1-(5-phospho-beta-D-ribosyl)imidazole-4-carboxamide</text>
        <dbReference type="Rhea" id="RHEA:15469"/>
        <dbReference type="ChEBI" id="CHEBI:58435"/>
        <dbReference type="ChEBI" id="CHEBI:58525"/>
        <dbReference type="EC" id="5.3.1.16"/>
    </reaction>
</comment>
<comment type="pathway">
    <text>Amino-acid biosynthesis; L-histidine biosynthesis; L-histidine from 5-phospho-alpha-D-ribose 1-diphosphate: step 4/9.</text>
</comment>
<comment type="subcellular location">
    <subcellularLocation>
        <location evidence="1">Cytoplasm</location>
    </subcellularLocation>
</comment>
<comment type="similarity">
    <text evidence="2">Belongs to the HisA/HisF family.</text>
</comment>
<evidence type="ECO:0000250" key="1"/>
<evidence type="ECO:0000305" key="2"/>
<sequence length="238" mass="25625">MIVIPAVDMKNGKCVQLIQGDPNKKHVELENPVEVAEKWVSEGAEMLHLVDLDGAIEGESVNRELIKEIIQTVNVPVQIGGGISVRCTESNLIEIGAKRIILGTVAVENPDIVEEISKKVGKEKVMVALDAKDGKVVIKGWKEKTKYTPVEMGKILEEKGAGSILFTNVNVEGLLTGMNVEPVETLVEELEIPVIASGGVTTIEDLIKLKAVGVEGVVVGSAIYKNLIDLKEAIKACR</sequence>
<dbReference type="EC" id="5.3.1.16"/>
<dbReference type="EMBL" id="M17742">
    <property type="protein sequence ID" value="AAA72615.1"/>
    <property type="molecule type" value="Genomic_DNA"/>
</dbReference>
<dbReference type="SMR" id="Q50757"/>
<dbReference type="UniPathway" id="UPA00031">
    <property type="reaction ID" value="UER00009"/>
</dbReference>
<dbReference type="GO" id="GO:0005737">
    <property type="term" value="C:cytoplasm"/>
    <property type="evidence" value="ECO:0007669"/>
    <property type="project" value="UniProtKB-SubCell"/>
</dbReference>
<dbReference type="GO" id="GO:0003949">
    <property type="term" value="F:1-(5-phosphoribosyl)-5-[(5-phosphoribosylamino)methylideneamino]imidazole-4-carboxamide isomerase activity"/>
    <property type="evidence" value="ECO:0007669"/>
    <property type="project" value="UniProtKB-UniRule"/>
</dbReference>
<dbReference type="GO" id="GO:0000105">
    <property type="term" value="P:L-histidine biosynthetic process"/>
    <property type="evidence" value="ECO:0007669"/>
    <property type="project" value="UniProtKB-UniRule"/>
</dbReference>
<dbReference type="GO" id="GO:0000162">
    <property type="term" value="P:L-tryptophan biosynthetic process"/>
    <property type="evidence" value="ECO:0007669"/>
    <property type="project" value="TreeGrafter"/>
</dbReference>
<dbReference type="CDD" id="cd04732">
    <property type="entry name" value="HisA"/>
    <property type="match status" value="1"/>
</dbReference>
<dbReference type="FunFam" id="3.20.20.70:FF:000009">
    <property type="entry name" value="1-(5-phosphoribosyl)-5-[(5-phosphoribosylamino)methylideneamino] imidazole-4-carboxamide isomerase"/>
    <property type="match status" value="1"/>
</dbReference>
<dbReference type="Gene3D" id="3.20.20.70">
    <property type="entry name" value="Aldolase class I"/>
    <property type="match status" value="1"/>
</dbReference>
<dbReference type="HAMAP" id="MF_01014">
    <property type="entry name" value="HisA"/>
    <property type="match status" value="1"/>
</dbReference>
<dbReference type="InterPro" id="IPR013785">
    <property type="entry name" value="Aldolase_TIM"/>
</dbReference>
<dbReference type="InterPro" id="IPR006062">
    <property type="entry name" value="His_biosynth"/>
</dbReference>
<dbReference type="InterPro" id="IPR006063">
    <property type="entry name" value="HisA_bact_arch"/>
</dbReference>
<dbReference type="InterPro" id="IPR044524">
    <property type="entry name" value="Isoase_HisA-like"/>
</dbReference>
<dbReference type="InterPro" id="IPR023016">
    <property type="entry name" value="Isoase_HisA-like_bact"/>
</dbReference>
<dbReference type="InterPro" id="IPR011060">
    <property type="entry name" value="RibuloseP-bd_barrel"/>
</dbReference>
<dbReference type="NCBIfam" id="TIGR00007">
    <property type="entry name" value="1-(5-phosphoribosyl)-5-[(5-phosphoribosylamino)methylideneamino]imidazole-4-carboxamide isomerase"/>
    <property type="match status" value="1"/>
</dbReference>
<dbReference type="NCBIfam" id="NF010112">
    <property type="entry name" value="PRK13585.1"/>
    <property type="match status" value="1"/>
</dbReference>
<dbReference type="PANTHER" id="PTHR43090">
    <property type="entry name" value="1-(5-PHOSPHORIBOSYL)-5-[(5-PHOSPHORIBOSYLAMINO)METHYLIDENEAMINO] IMIDAZOLE-4-CARBOXAMIDE ISOMERASE"/>
    <property type="match status" value="1"/>
</dbReference>
<dbReference type="PANTHER" id="PTHR43090:SF7">
    <property type="entry name" value="1-(5-PHOSPHORIBOSYL)-5-[(5-PHOSPHORIBOSYLAMINO)METHYLIDENEAMINO] IMIDAZOLE-4-CARBOXAMIDE ISOMERASE"/>
    <property type="match status" value="1"/>
</dbReference>
<dbReference type="Pfam" id="PF00977">
    <property type="entry name" value="His_biosynth"/>
    <property type="match status" value="1"/>
</dbReference>
<dbReference type="SUPFAM" id="SSF51366">
    <property type="entry name" value="Ribulose-phoshate binding barrel"/>
    <property type="match status" value="1"/>
</dbReference>
<feature type="chain" id="PRO_0000142097" description="1-(5-phosphoribosyl)-5-[(5-phosphoribosylamino)methylideneamino] imidazole-4-carboxamide isomerase">
    <location>
        <begin position="1"/>
        <end position="238"/>
    </location>
</feature>
<feature type="active site" description="Proton acceptor" evidence="1">
    <location>
        <position position="8"/>
    </location>
</feature>
<feature type="active site" description="Proton donor" evidence="1">
    <location>
        <position position="130"/>
    </location>
</feature>
<keyword id="KW-0028">Amino-acid biosynthesis</keyword>
<keyword id="KW-0963">Cytoplasm</keyword>
<keyword id="KW-0368">Histidine biosynthesis</keyword>
<keyword id="KW-0413">Isomerase</keyword>
<protein>
    <recommendedName>
        <fullName>1-(5-phosphoribosyl)-5-[(5-phosphoribosylamino)methylideneamino] imidazole-4-carboxamide isomerase</fullName>
        <ecNumber>5.3.1.16</ecNumber>
    </recommendedName>
    <alternativeName>
        <fullName>Phosphoribosylformimino-5-aminoimidazole carboxamide ribotide isomerase</fullName>
    </alternativeName>
</protein>
<name>HIS4_METTL</name>
<proteinExistence type="inferred from homology"/>
<gene>
    <name type="primary">hisA</name>
</gene>
<accession>Q50757</accession>